<proteinExistence type="inferred from homology"/>
<accession>B6GWX1</accession>
<keyword id="KW-0143">Chaperone</keyword>
<keyword id="KW-0496">Mitochondrion</keyword>
<keyword id="KW-1185">Reference proteome</keyword>
<keyword id="KW-0809">Transit peptide</keyword>
<evidence type="ECO:0000250" key="1"/>
<evidence type="ECO:0000255" key="2"/>
<evidence type="ECO:0000305" key="3"/>
<comment type="function">
    <text evidence="1">Assembly factor required for Rieske Fe-S protein RIP1 incorporation into the cytochrome b-c1 (CIII) complex. Functions as a chaperone, binding to this subunit within the mitochondrial matrix and stabilizing it prior to its translocation and insertion into the late CIII dimeric intermediate within the mitochondrial inner membrane. Modulates the mitochondrial matrix zinc pool (By similarity).</text>
</comment>
<comment type="subunit">
    <text evidence="1">Interacts with RIP1.</text>
</comment>
<comment type="subcellular location">
    <subcellularLocation>
        <location evidence="1">Mitochondrion matrix</location>
    </subcellularLocation>
</comment>
<comment type="similarity">
    <text evidence="3">Belongs to the complex I LYR family. MZM1 subfamily.</text>
</comment>
<sequence>MTTSTAAAAKSAYRQLLRSTRVVFHNDLPVLIAARQEARQNFEKNRRPAVDTGMQINHAIEVANILRHNIVQGSREQGDETAKWELNIHDQIERGDNDSIKVGNQDVKIHKACSS</sequence>
<organism>
    <name type="scientific">Penicillium rubens (strain ATCC 28089 / DSM 1075 / NRRL 1951 / Wisconsin 54-1255)</name>
    <name type="common">Penicillium chrysogenum</name>
    <dbReference type="NCBI Taxonomy" id="500485"/>
    <lineage>
        <taxon>Eukaryota</taxon>
        <taxon>Fungi</taxon>
        <taxon>Dikarya</taxon>
        <taxon>Ascomycota</taxon>
        <taxon>Pezizomycotina</taxon>
        <taxon>Eurotiomycetes</taxon>
        <taxon>Eurotiomycetidae</taxon>
        <taxon>Eurotiales</taxon>
        <taxon>Aspergillaceae</taxon>
        <taxon>Penicillium</taxon>
        <taxon>Penicillium chrysogenum species complex</taxon>
    </lineage>
</organism>
<gene>
    <name type="primary">MZM1</name>
    <name type="ORF">Pc12g14820</name>
</gene>
<name>MZM1_PENRW</name>
<reference key="1">
    <citation type="journal article" date="2008" name="Nat. Biotechnol.">
        <title>Genome sequencing and analysis of the filamentous fungus Penicillium chrysogenum.</title>
        <authorList>
            <person name="van den Berg M.A."/>
            <person name="Albang R."/>
            <person name="Albermann K."/>
            <person name="Badger J.H."/>
            <person name="Daran J.-M."/>
            <person name="Driessen A.J.M."/>
            <person name="Garcia-Estrada C."/>
            <person name="Fedorova N.D."/>
            <person name="Harris D.M."/>
            <person name="Heijne W.H.M."/>
            <person name="Joardar V.S."/>
            <person name="Kiel J.A.K.W."/>
            <person name="Kovalchuk A."/>
            <person name="Martin J.F."/>
            <person name="Nierman W.C."/>
            <person name="Nijland J.G."/>
            <person name="Pronk J.T."/>
            <person name="Roubos J.A."/>
            <person name="van der Klei I.J."/>
            <person name="van Peij N.N.M.E."/>
            <person name="Veenhuis M."/>
            <person name="von Doehren H."/>
            <person name="Wagner C."/>
            <person name="Wortman J.R."/>
            <person name="Bovenberg R.A.L."/>
        </authorList>
    </citation>
    <scope>NUCLEOTIDE SEQUENCE [LARGE SCALE GENOMIC DNA]</scope>
    <source>
        <strain>ATCC 28089 / DSM 1075 / NRRL 1951 / Wisconsin 54-1255</strain>
    </source>
</reference>
<dbReference type="EMBL" id="AM920427">
    <property type="protein sequence ID" value="CAP81109.1"/>
    <property type="molecule type" value="Genomic_DNA"/>
</dbReference>
<dbReference type="RefSeq" id="XP_002558286.1">
    <property type="nucleotide sequence ID" value="XM_002558240.1"/>
</dbReference>
<dbReference type="SMR" id="B6GWX1"/>
<dbReference type="STRING" id="500485.B6GWX1"/>
<dbReference type="GeneID" id="8308302"/>
<dbReference type="KEGG" id="pcs:N7525_001130"/>
<dbReference type="VEuPathDB" id="FungiDB:PCH_Pc12g14820"/>
<dbReference type="eggNOG" id="ENOG502S6EF">
    <property type="taxonomic scope" value="Eukaryota"/>
</dbReference>
<dbReference type="HOGENOM" id="CLU_147114_2_0_1"/>
<dbReference type="OMA" id="KYKLRIH"/>
<dbReference type="OrthoDB" id="529194at2759"/>
<dbReference type="BioCyc" id="PCHR:PC12G14820-MONOMER"/>
<dbReference type="Proteomes" id="UP000000724">
    <property type="component" value="Contig Pc00c12"/>
</dbReference>
<dbReference type="GO" id="GO:0005759">
    <property type="term" value="C:mitochondrial matrix"/>
    <property type="evidence" value="ECO:0007669"/>
    <property type="project" value="UniProtKB-SubCell"/>
</dbReference>
<dbReference type="GO" id="GO:0044183">
    <property type="term" value="F:protein folding chaperone"/>
    <property type="evidence" value="ECO:0007669"/>
    <property type="project" value="TreeGrafter"/>
</dbReference>
<dbReference type="GO" id="GO:0034551">
    <property type="term" value="P:mitochondrial respiratory chain complex III assembly"/>
    <property type="evidence" value="ECO:0007669"/>
    <property type="project" value="InterPro"/>
</dbReference>
<dbReference type="CDD" id="cd20267">
    <property type="entry name" value="Complex1_LYR_LYRM7"/>
    <property type="match status" value="1"/>
</dbReference>
<dbReference type="InterPro" id="IPR045298">
    <property type="entry name" value="Complex1_LYR_LYRM7"/>
</dbReference>
<dbReference type="InterPro" id="IPR050435">
    <property type="entry name" value="MZM1/LYRM7"/>
</dbReference>
<dbReference type="PANTHER" id="PTHR46749">
    <property type="entry name" value="COMPLEX III ASSEMBLY FACTOR LYRM7"/>
    <property type="match status" value="1"/>
</dbReference>
<dbReference type="PANTHER" id="PTHR46749:SF1">
    <property type="entry name" value="COMPLEX III ASSEMBLY FACTOR LYRM7"/>
    <property type="match status" value="1"/>
</dbReference>
<feature type="transit peptide" description="Mitochondrion" evidence="2">
    <location>
        <begin position="1"/>
        <end position="23"/>
    </location>
</feature>
<feature type="chain" id="PRO_0000405505" description="Mitochondrial zinc maintenance protein 1, mitochondrial">
    <location>
        <begin position="24"/>
        <end position="115"/>
    </location>
</feature>
<protein>
    <recommendedName>
        <fullName>Mitochondrial zinc maintenance protein 1, mitochondrial</fullName>
    </recommendedName>
</protein>